<dbReference type="EC" id="2.8.1.8" evidence="1"/>
<dbReference type="EMBL" id="CP000139">
    <property type="protein sequence ID" value="ABR39662.1"/>
    <property type="molecule type" value="Genomic_DNA"/>
</dbReference>
<dbReference type="RefSeq" id="WP_005848926.1">
    <property type="nucleotide sequence ID" value="NZ_JANSWM010000118.1"/>
</dbReference>
<dbReference type="SMR" id="A6L1U8"/>
<dbReference type="STRING" id="435590.BVU_1990"/>
<dbReference type="PaxDb" id="435590-BVU_1990"/>
<dbReference type="DNASU" id="5302956"/>
<dbReference type="GeneID" id="5302956"/>
<dbReference type="KEGG" id="bvu:BVU_1990"/>
<dbReference type="eggNOG" id="COG0320">
    <property type="taxonomic scope" value="Bacteria"/>
</dbReference>
<dbReference type="HOGENOM" id="CLU_033144_2_1_10"/>
<dbReference type="BioCyc" id="BVUL435590:G1G59-2083-MONOMER"/>
<dbReference type="UniPathway" id="UPA00538">
    <property type="reaction ID" value="UER00593"/>
</dbReference>
<dbReference type="Proteomes" id="UP000002861">
    <property type="component" value="Chromosome"/>
</dbReference>
<dbReference type="GO" id="GO:0005737">
    <property type="term" value="C:cytoplasm"/>
    <property type="evidence" value="ECO:0007669"/>
    <property type="project" value="UniProtKB-SubCell"/>
</dbReference>
<dbReference type="GO" id="GO:0051539">
    <property type="term" value="F:4 iron, 4 sulfur cluster binding"/>
    <property type="evidence" value="ECO:0007669"/>
    <property type="project" value="UniProtKB-UniRule"/>
</dbReference>
<dbReference type="GO" id="GO:0016992">
    <property type="term" value="F:lipoate synthase activity"/>
    <property type="evidence" value="ECO:0007669"/>
    <property type="project" value="UniProtKB-UniRule"/>
</dbReference>
<dbReference type="GO" id="GO:0046872">
    <property type="term" value="F:metal ion binding"/>
    <property type="evidence" value="ECO:0007669"/>
    <property type="project" value="UniProtKB-KW"/>
</dbReference>
<dbReference type="FunFam" id="3.20.20.70:FF:000040">
    <property type="entry name" value="Lipoyl synthase"/>
    <property type="match status" value="1"/>
</dbReference>
<dbReference type="Gene3D" id="3.20.20.70">
    <property type="entry name" value="Aldolase class I"/>
    <property type="match status" value="1"/>
</dbReference>
<dbReference type="HAMAP" id="MF_00206">
    <property type="entry name" value="Lipoyl_synth"/>
    <property type="match status" value="1"/>
</dbReference>
<dbReference type="InterPro" id="IPR013785">
    <property type="entry name" value="Aldolase_TIM"/>
</dbReference>
<dbReference type="InterPro" id="IPR006638">
    <property type="entry name" value="Elp3/MiaA/NifB-like_rSAM"/>
</dbReference>
<dbReference type="InterPro" id="IPR003698">
    <property type="entry name" value="Lipoyl_synth"/>
</dbReference>
<dbReference type="InterPro" id="IPR007197">
    <property type="entry name" value="rSAM"/>
</dbReference>
<dbReference type="NCBIfam" id="TIGR00510">
    <property type="entry name" value="lipA"/>
    <property type="match status" value="1"/>
</dbReference>
<dbReference type="NCBIfam" id="NF004019">
    <property type="entry name" value="PRK05481.1"/>
    <property type="match status" value="1"/>
</dbReference>
<dbReference type="NCBIfam" id="NF009544">
    <property type="entry name" value="PRK12928.1"/>
    <property type="match status" value="1"/>
</dbReference>
<dbReference type="PANTHER" id="PTHR10949">
    <property type="entry name" value="LIPOYL SYNTHASE"/>
    <property type="match status" value="1"/>
</dbReference>
<dbReference type="PANTHER" id="PTHR10949:SF0">
    <property type="entry name" value="LIPOYL SYNTHASE, MITOCHONDRIAL"/>
    <property type="match status" value="1"/>
</dbReference>
<dbReference type="Pfam" id="PF04055">
    <property type="entry name" value="Radical_SAM"/>
    <property type="match status" value="1"/>
</dbReference>
<dbReference type="PIRSF" id="PIRSF005963">
    <property type="entry name" value="Lipoyl_synth"/>
    <property type="match status" value="1"/>
</dbReference>
<dbReference type="SFLD" id="SFLDF00271">
    <property type="entry name" value="lipoyl_synthase"/>
    <property type="match status" value="1"/>
</dbReference>
<dbReference type="SFLD" id="SFLDS00029">
    <property type="entry name" value="Radical_SAM"/>
    <property type="match status" value="1"/>
</dbReference>
<dbReference type="SMART" id="SM00729">
    <property type="entry name" value="Elp3"/>
    <property type="match status" value="1"/>
</dbReference>
<dbReference type="SUPFAM" id="SSF102114">
    <property type="entry name" value="Radical SAM enzymes"/>
    <property type="match status" value="1"/>
</dbReference>
<dbReference type="PROSITE" id="PS51918">
    <property type="entry name" value="RADICAL_SAM"/>
    <property type="match status" value="1"/>
</dbReference>
<reference key="1">
    <citation type="journal article" date="2007" name="PLoS Biol.">
        <title>Evolution of symbiotic bacteria in the distal human intestine.</title>
        <authorList>
            <person name="Xu J."/>
            <person name="Mahowald M.A."/>
            <person name="Ley R.E."/>
            <person name="Lozupone C.A."/>
            <person name="Hamady M."/>
            <person name="Martens E.C."/>
            <person name="Henrissat B."/>
            <person name="Coutinho P.M."/>
            <person name="Minx P."/>
            <person name="Latreille P."/>
            <person name="Cordum H."/>
            <person name="Van Brunt A."/>
            <person name="Kim K."/>
            <person name="Fulton R.S."/>
            <person name="Fulton L.A."/>
            <person name="Clifton S.W."/>
            <person name="Wilson R.K."/>
            <person name="Knight R.D."/>
            <person name="Gordon J.I."/>
        </authorList>
    </citation>
    <scope>NUCLEOTIDE SEQUENCE [LARGE SCALE GENOMIC DNA]</scope>
    <source>
        <strain>ATCC 8482 / DSM 1447 / JCM 5826 / CCUG 4940 / NBRC 14291 / NCTC 11154</strain>
    </source>
</reference>
<feature type="chain" id="PRO_0000325235" description="Lipoyl synthase">
    <location>
        <begin position="1"/>
        <end position="284"/>
    </location>
</feature>
<feature type="domain" description="Radical SAM core" evidence="2">
    <location>
        <begin position="48"/>
        <end position="262"/>
    </location>
</feature>
<feature type="binding site" evidence="1">
    <location>
        <position position="36"/>
    </location>
    <ligand>
        <name>[4Fe-4S] cluster</name>
        <dbReference type="ChEBI" id="CHEBI:49883"/>
        <label>1</label>
    </ligand>
</feature>
<feature type="binding site" evidence="1">
    <location>
        <position position="41"/>
    </location>
    <ligand>
        <name>[4Fe-4S] cluster</name>
        <dbReference type="ChEBI" id="CHEBI:49883"/>
        <label>1</label>
    </ligand>
</feature>
<feature type="binding site" evidence="1">
    <location>
        <position position="47"/>
    </location>
    <ligand>
        <name>[4Fe-4S] cluster</name>
        <dbReference type="ChEBI" id="CHEBI:49883"/>
        <label>1</label>
    </ligand>
</feature>
<feature type="binding site" evidence="1">
    <location>
        <position position="62"/>
    </location>
    <ligand>
        <name>[4Fe-4S] cluster</name>
        <dbReference type="ChEBI" id="CHEBI:49883"/>
        <label>2</label>
        <note>4Fe-4S-S-AdoMet</note>
    </ligand>
</feature>
<feature type="binding site" evidence="1">
    <location>
        <position position="66"/>
    </location>
    <ligand>
        <name>[4Fe-4S] cluster</name>
        <dbReference type="ChEBI" id="CHEBI:49883"/>
        <label>2</label>
        <note>4Fe-4S-S-AdoMet</note>
    </ligand>
</feature>
<feature type="binding site" evidence="1">
    <location>
        <position position="69"/>
    </location>
    <ligand>
        <name>[4Fe-4S] cluster</name>
        <dbReference type="ChEBI" id="CHEBI:49883"/>
        <label>2</label>
        <note>4Fe-4S-S-AdoMet</note>
    </ligand>
</feature>
<feature type="binding site" evidence="1">
    <location>
        <position position="273"/>
    </location>
    <ligand>
        <name>[4Fe-4S] cluster</name>
        <dbReference type="ChEBI" id="CHEBI:49883"/>
        <label>1</label>
    </ligand>
</feature>
<name>LIPA_PHOV8</name>
<protein>
    <recommendedName>
        <fullName evidence="1">Lipoyl synthase</fullName>
        <ecNumber evidence="1">2.8.1.8</ecNumber>
    </recommendedName>
    <alternativeName>
        <fullName evidence="1">Lip-syn</fullName>
        <shortName evidence="1">LS</shortName>
    </alternativeName>
    <alternativeName>
        <fullName evidence="1">Lipoate synthase</fullName>
    </alternativeName>
    <alternativeName>
        <fullName evidence="1">Lipoic acid synthase</fullName>
    </alternativeName>
    <alternativeName>
        <fullName evidence="1">Sulfur insertion protein LipA</fullName>
    </alternativeName>
</protein>
<evidence type="ECO:0000255" key="1">
    <source>
        <dbReference type="HAMAP-Rule" id="MF_00206"/>
    </source>
</evidence>
<evidence type="ECO:0000255" key="2">
    <source>
        <dbReference type="PROSITE-ProRule" id="PRU01266"/>
    </source>
</evidence>
<keyword id="KW-0004">4Fe-4S</keyword>
<keyword id="KW-0963">Cytoplasm</keyword>
<keyword id="KW-0408">Iron</keyword>
<keyword id="KW-0411">Iron-sulfur</keyword>
<keyword id="KW-0479">Metal-binding</keyword>
<keyword id="KW-0949">S-adenosyl-L-methionine</keyword>
<keyword id="KW-0808">Transferase</keyword>
<sequence length="284" mass="31725">MNHVKKPDWLKINIGANARYTETKHIVDSHKLHTICSSGRCPNMGECWGKGTATFMIGGEICTRSCKFCNTQTGRPLPLDPEEPTHVAESIQLMKLSHAVITSVDRDDLDDLGAAHWAKTISEIKRLNPETTTEVLIPDFQGKSELIQLVIDAKPDIISHNMETVRRISPLVRSAANYATSLKVIKQIANNGITAKSGIMVGLGERPEEVEEVMDDLLAQGCKILTIGQYLQPTHRHYPVAEYITPDQFKQYRTIGLKKGFREVESAPLVRSSYHAEKHIKFKG</sequence>
<gene>
    <name evidence="1" type="primary">lipA</name>
    <name type="ordered locus">BVU_1990</name>
</gene>
<comment type="function">
    <text evidence="1">Catalyzes the radical-mediated insertion of two sulfur atoms into the C-6 and C-8 positions of the octanoyl moiety bound to the lipoyl domains of lipoate-dependent enzymes, thereby converting the octanoylated domains into lipoylated derivatives.</text>
</comment>
<comment type="catalytic activity">
    <reaction evidence="1">
        <text>[[Fe-S] cluster scaffold protein carrying a second [4Fe-4S](2+) cluster] + N(6)-octanoyl-L-lysyl-[protein] + 2 oxidized [2Fe-2S]-[ferredoxin] + 2 S-adenosyl-L-methionine + 4 H(+) = [[Fe-S] cluster scaffold protein] + N(6)-[(R)-dihydrolipoyl]-L-lysyl-[protein] + 4 Fe(3+) + 2 hydrogen sulfide + 2 5'-deoxyadenosine + 2 L-methionine + 2 reduced [2Fe-2S]-[ferredoxin]</text>
        <dbReference type="Rhea" id="RHEA:16585"/>
        <dbReference type="Rhea" id="RHEA-COMP:9928"/>
        <dbReference type="Rhea" id="RHEA-COMP:10000"/>
        <dbReference type="Rhea" id="RHEA-COMP:10001"/>
        <dbReference type="Rhea" id="RHEA-COMP:10475"/>
        <dbReference type="Rhea" id="RHEA-COMP:14568"/>
        <dbReference type="Rhea" id="RHEA-COMP:14569"/>
        <dbReference type="ChEBI" id="CHEBI:15378"/>
        <dbReference type="ChEBI" id="CHEBI:17319"/>
        <dbReference type="ChEBI" id="CHEBI:29034"/>
        <dbReference type="ChEBI" id="CHEBI:29919"/>
        <dbReference type="ChEBI" id="CHEBI:33722"/>
        <dbReference type="ChEBI" id="CHEBI:33737"/>
        <dbReference type="ChEBI" id="CHEBI:33738"/>
        <dbReference type="ChEBI" id="CHEBI:57844"/>
        <dbReference type="ChEBI" id="CHEBI:59789"/>
        <dbReference type="ChEBI" id="CHEBI:78809"/>
        <dbReference type="ChEBI" id="CHEBI:83100"/>
        <dbReference type="EC" id="2.8.1.8"/>
    </reaction>
</comment>
<comment type="cofactor">
    <cofactor evidence="1">
        <name>[4Fe-4S] cluster</name>
        <dbReference type="ChEBI" id="CHEBI:49883"/>
    </cofactor>
    <text evidence="1">Binds 2 [4Fe-4S] clusters per subunit. One cluster is coordinated with 3 cysteines and an exchangeable S-adenosyl-L-methionine.</text>
</comment>
<comment type="pathway">
    <text evidence="1">Protein modification; protein lipoylation via endogenous pathway; protein N(6)-(lipoyl)lysine from octanoyl-[acyl-carrier-protein]: step 2/2.</text>
</comment>
<comment type="subcellular location">
    <subcellularLocation>
        <location evidence="1">Cytoplasm</location>
    </subcellularLocation>
</comment>
<comment type="similarity">
    <text evidence="1">Belongs to the radical SAM superfamily. Lipoyl synthase family.</text>
</comment>
<organism>
    <name type="scientific">Phocaeicola vulgatus (strain ATCC 8482 / DSM 1447 / JCM 5826 / CCUG 4940 / NBRC 14291 / NCTC 11154)</name>
    <name type="common">Bacteroides vulgatus</name>
    <dbReference type="NCBI Taxonomy" id="435590"/>
    <lineage>
        <taxon>Bacteria</taxon>
        <taxon>Pseudomonadati</taxon>
        <taxon>Bacteroidota</taxon>
        <taxon>Bacteroidia</taxon>
        <taxon>Bacteroidales</taxon>
        <taxon>Bacteroidaceae</taxon>
        <taxon>Phocaeicola</taxon>
    </lineage>
</organism>
<accession>A6L1U8</accession>
<proteinExistence type="inferred from homology"/>